<keyword id="KW-1003">Cell membrane</keyword>
<keyword id="KW-0961">Cell wall biogenesis/degradation</keyword>
<keyword id="KW-0135">Cellulose biosynthesis</keyword>
<keyword id="KW-0175">Coiled coil</keyword>
<keyword id="KW-0325">Glycoprotein</keyword>
<keyword id="KW-0328">Glycosyltransferase</keyword>
<keyword id="KW-0464">Manganese</keyword>
<keyword id="KW-0472">Membrane</keyword>
<keyword id="KW-0479">Metal-binding</keyword>
<keyword id="KW-1185">Reference proteome</keyword>
<keyword id="KW-0808">Transferase</keyword>
<keyword id="KW-0812">Transmembrane</keyword>
<keyword id="KW-1133">Transmembrane helix</keyword>
<keyword id="KW-0862">Zinc</keyword>
<keyword id="KW-0863">Zinc-finger</keyword>
<name>CESA4_ORYSJ</name>
<protein>
    <recommendedName>
        <fullName>Cellulose synthase A catalytic subunit 4 [UDP-forming]</fullName>
        <ecNumber evidence="8">2.4.1.12</ecNumber>
    </recommendedName>
    <alternativeName>
        <fullName>OsCesA4</fullName>
    </alternativeName>
</protein>
<dbReference type="EC" id="2.4.1.12" evidence="8"/>
<dbReference type="EMBL" id="AP003237">
    <property type="protein sequence ID" value="BAD87094.1"/>
    <property type="molecule type" value="Genomic_DNA"/>
</dbReference>
<dbReference type="EMBL" id="AP008207">
    <property type="protein sequence ID" value="BAF06166.1"/>
    <property type="molecule type" value="Genomic_DNA"/>
</dbReference>
<dbReference type="EMBL" id="AP014957">
    <property type="protein sequence ID" value="BAS74355.1"/>
    <property type="molecule type" value="Genomic_DNA"/>
</dbReference>
<dbReference type="EMBL" id="AK100475">
    <property type="protein sequence ID" value="BAG94625.1"/>
    <property type="molecule type" value="mRNA"/>
</dbReference>
<dbReference type="RefSeq" id="XP_015621242.1">
    <property type="nucleotide sequence ID" value="XM_015765756.1"/>
</dbReference>
<dbReference type="SMR" id="Q5JN63"/>
<dbReference type="FunCoup" id="Q5JN63">
    <property type="interactions" value="68"/>
</dbReference>
<dbReference type="STRING" id="39947.Q5JN63"/>
<dbReference type="CAZy" id="GT2">
    <property type="family name" value="Glycosyltransferase Family 2"/>
</dbReference>
<dbReference type="GlyCosmos" id="Q5JN63">
    <property type="glycosylation" value="1 site, No reported glycans"/>
</dbReference>
<dbReference type="PaxDb" id="39947-Q5JN63"/>
<dbReference type="EnsemblPlants" id="Os01t0750300-01">
    <property type="protein sequence ID" value="Os01t0750300-01"/>
    <property type="gene ID" value="Os01g0750300"/>
</dbReference>
<dbReference type="Gramene" id="Os01t0750300-01">
    <property type="protein sequence ID" value="Os01t0750300-01"/>
    <property type="gene ID" value="Os01g0750300"/>
</dbReference>
<dbReference type="KEGG" id="dosa:Os01g0750300"/>
<dbReference type="eggNOG" id="ENOG502QTVZ">
    <property type="taxonomic scope" value="Eukaryota"/>
</dbReference>
<dbReference type="HOGENOM" id="CLU_001418_0_0_1"/>
<dbReference type="InParanoid" id="Q5JN63"/>
<dbReference type="OMA" id="CATPYDE"/>
<dbReference type="OrthoDB" id="2161379at2759"/>
<dbReference type="PlantReactome" id="R-OSA-1119314">
    <property type="pathway name" value="Cellulose biosynthesis"/>
</dbReference>
<dbReference type="UniPathway" id="UPA00695"/>
<dbReference type="Proteomes" id="UP000000763">
    <property type="component" value="Chromosome 1"/>
</dbReference>
<dbReference type="Proteomes" id="UP000059680">
    <property type="component" value="Chromosome 1"/>
</dbReference>
<dbReference type="ExpressionAtlas" id="Q5JN63">
    <property type="expression patterns" value="baseline and differential"/>
</dbReference>
<dbReference type="GO" id="GO:0005886">
    <property type="term" value="C:plasma membrane"/>
    <property type="evidence" value="ECO:0000318"/>
    <property type="project" value="GO_Central"/>
</dbReference>
<dbReference type="GO" id="GO:0016760">
    <property type="term" value="F:cellulose synthase (UDP-forming) activity"/>
    <property type="evidence" value="ECO:0007669"/>
    <property type="project" value="UniProtKB-EC"/>
</dbReference>
<dbReference type="GO" id="GO:0016759">
    <property type="term" value="F:cellulose synthase activity"/>
    <property type="evidence" value="ECO:0000318"/>
    <property type="project" value="GO_Central"/>
</dbReference>
<dbReference type="GO" id="GO:0008270">
    <property type="term" value="F:zinc ion binding"/>
    <property type="evidence" value="ECO:0007669"/>
    <property type="project" value="UniProtKB-KW"/>
</dbReference>
<dbReference type="GO" id="GO:0071555">
    <property type="term" value="P:cell wall organization"/>
    <property type="evidence" value="ECO:0007669"/>
    <property type="project" value="UniProtKB-KW"/>
</dbReference>
<dbReference type="GO" id="GO:0030244">
    <property type="term" value="P:cellulose biosynthetic process"/>
    <property type="evidence" value="ECO:0000315"/>
    <property type="project" value="UniProtKB"/>
</dbReference>
<dbReference type="GO" id="GO:0009833">
    <property type="term" value="P:plant-type primary cell wall biogenesis"/>
    <property type="evidence" value="ECO:0000318"/>
    <property type="project" value="GO_Central"/>
</dbReference>
<dbReference type="GO" id="GO:0009834">
    <property type="term" value="P:plant-type secondary cell wall biogenesis"/>
    <property type="evidence" value="ECO:0000315"/>
    <property type="project" value="UniProtKB"/>
</dbReference>
<dbReference type="FunFam" id="3.90.550.10:FF:000009">
    <property type="entry name" value="Cellulose synthase"/>
    <property type="match status" value="1"/>
</dbReference>
<dbReference type="Gene3D" id="3.90.550.10">
    <property type="entry name" value="Spore Coat Polysaccharide Biosynthesis Protein SpsA, Chain A"/>
    <property type="match status" value="1"/>
</dbReference>
<dbReference type="InterPro" id="IPR005150">
    <property type="entry name" value="Cellulose_synth"/>
</dbReference>
<dbReference type="InterPro" id="IPR029044">
    <property type="entry name" value="Nucleotide-diphossugar_trans"/>
</dbReference>
<dbReference type="PANTHER" id="PTHR13301">
    <property type="entry name" value="X-BOX TRANSCRIPTION FACTOR-RELATED"/>
    <property type="match status" value="1"/>
</dbReference>
<dbReference type="Pfam" id="PF03552">
    <property type="entry name" value="Cellulose_synt"/>
    <property type="match status" value="1"/>
</dbReference>
<dbReference type="SUPFAM" id="SSF53448">
    <property type="entry name" value="Nucleotide-diphospho-sugar transferases"/>
    <property type="match status" value="1"/>
</dbReference>
<dbReference type="SUPFAM" id="SSF57850">
    <property type="entry name" value="RING/U-box"/>
    <property type="match status" value="1"/>
</dbReference>
<feature type="chain" id="PRO_0000319363" description="Cellulose synthase A catalytic subunit 4 [UDP-forming]">
    <location>
        <begin position="1"/>
        <end position="989"/>
    </location>
</feature>
<feature type="topological domain" description="Cytoplasmic" evidence="3">
    <location>
        <begin position="1"/>
        <end position="184"/>
    </location>
</feature>
<feature type="transmembrane region" description="Helical" evidence="3">
    <location>
        <begin position="185"/>
        <end position="205"/>
    </location>
</feature>
<feature type="topological domain" description="Extracellular" evidence="3">
    <location>
        <begin position="206"/>
        <end position="213"/>
    </location>
</feature>
<feature type="transmembrane region" description="Helical" evidence="3">
    <location>
        <begin position="214"/>
        <end position="234"/>
    </location>
</feature>
<feature type="topological domain" description="Cytoplasmic" evidence="3">
    <location>
        <begin position="235"/>
        <end position="772"/>
    </location>
</feature>
<feature type="transmembrane region" description="Helical" evidence="3">
    <location>
        <begin position="773"/>
        <end position="793"/>
    </location>
</feature>
<feature type="topological domain" description="Extracellular" evidence="3">
    <location>
        <begin position="794"/>
        <end position="798"/>
    </location>
</feature>
<feature type="transmembrane region" description="Helical" evidence="3">
    <location>
        <begin position="799"/>
        <end position="819"/>
    </location>
</feature>
<feature type="topological domain" description="Cytoplasmic" evidence="3">
    <location>
        <begin position="820"/>
        <end position="835"/>
    </location>
</feature>
<feature type="transmembrane region" description="Helical" evidence="3">
    <location>
        <begin position="836"/>
        <end position="856"/>
    </location>
</feature>
<feature type="topological domain" description="Extracellular" evidence="3">
    <location>
        <begin position="857"/>
        <end position="884"/>
    </location>
</feature>
<feature type="transmembrane region" description="Helical" evidence="3">
    <location>
        <begin position="885"/>
        <end position="905"/>
    </location>
</feature>
<feature type="topological domain" description="Cytoplasmic" evidence="3">
    <location>
        <begin position="906"/>
        <end position="916"/>
    </location>
</feature>
<feature type="transmembrane region" description="Helical" evidence="3">
    <location>
        <begin position="917"/>
        <end position="937"/>
    </location>
</feature>
<feature type="topological domain" description="Extracellular" evidence="3">
    <location>
        <begin position="938"/>
        <end position="946"/>
    </location>
</feature>
<feature type="transmembrane region" description="Helical" evidence="3">
    <location>
        <begin position="947"/>
        <end position="967"/>
    </location>
</feature>
<feature type="topological domain" description="Cytoplasmic" evidence="3">
    <location>
        <begin position="968"/>
        <end position="989"/>
    </location>
</feature>
<feature type="zinc finger region" description="RING-type; degenerate">
    <location>
        <begin position="9"/>
        <end position="47"/>
    </location>
</feature>
<feature type="region of interest" description="Disordered" evidence="5">
    <location>
        <begin position="138"/>
        <end position="158"/>
    </location>
</feature>
<feature type="coiled-coil region" evidence="3">
    <location>
        <begin position="362"/>
        <end position="389"/>
    </location>
</feature>
<feature type="compositionally biased region" description="Basic residues" evidence="5">
    <location>
        <begin position="138"/>
        <end position="149"/>
    </location>
</feature>
<feature type="active site" evidence="3">
    <location>
        <position position="308"/>
    </location>
</feature>
<feature type="active site" evidence="3">
    <location>
        <position position="688"/>
    </location>
</feature>
<feature type="binding site" evidence="2">
    <location>
        <position position="9"/>
    </location>
    <ligand>
        <name>Zn(2+)</name>
        <dbReference type="ChEBI" id="CHEBI:29105"/>
        <label>1</label>
    </ligand>
</feature>
<feature type="binding site" evidence="2">
    <location>
        <position position="12"/>
    </location>
    <ligand>
        <name>Zn(2+)</name>
        <dbReference type="ChEBI" id="CHEBI:29105"/>
        <label>1</label>
    </ligand>
</feature>
<feature type="binding site" evidence="2">
    <location>
        <position position="20"/>
    </location>
    <ligand>
        <name>Zn(2+)</name>
        <dbReference type="ChEBI" id="CHEBI:29105"/>
        <label>2</label>
    </ligand>
</feature>
<feature type="binding site" evidence="2">
    <location>
        <position position="23"/>
    </location>
    <ligand>
        <name>Zn(2+)</name>
        <dbReference type="ChEBI" id="CHEBI:29105"/>
        <label>2</label>
    </ligand>
</feature>
<feature type="binding site" evidence="2">
    <location>
        <position position="28"/>
    </location>
    <ligand>
        <name>Zn(2+)</name>
        <dbReference type="ChEBI" id="CHEBI:29105"/>
        <label>1</label>
    </ligand>
</feature>
<feature type="binding site" evidence="2">
    <location>
        <position position="31"/>
    </location>
    <ligand>
        <name>Zn(2+)</name>
        <dbReference type="ChEBI" id="CHEBI:29105"/>
        <label>1</label>
    </ligand>
</feature>
<feature type="binding site" evidence="2">
    <location>
        <position position="43"/>
    </location>
    <ligand>
        <name>Zn(2+)</name>
        <dbReference type="ChEBI" id="CHEBI:29105"/>
        <label>2</label>
    </ligand>
</feature>
<feature type="binding site" evidence="2">
    <location>
        <position position="46"/>
    </location>
    <ligand>
        <name>Zn(2+)</name>
        <dbReference type="ChEBI" id="CHEBI:29105"/>
        <label>2</label>
    </ligand>
</feature>
<feature type="binding site" evidence="1">
    <location>
        <position position="272"/>
    </location>
    <ligand>
        <name>UDP-alpha-D-glucose</name>
        <dbReference type="ChEBI" id="CHEBI:58885"/>
    </ligand>
</feature>
<feature type="binding site" evidence="1">
    <location>
        <position position="278"/>
    </location>
    <ligand>
        <name>UDP-alpha-D-glucose</name>
        <dbReference type="ChEBI" id="CHEBI:58885"/>
    </ligand>
</feature>
<feature type="binding site" evidence="1">
    <location>
        <position position="279"/>
    </location>
    <ligand>
        <name>UDP-alpha-D-glucose</name>
        <dbReference type="ChEBI" id="CHEBI:58885"/>
    </ligand>
</feature>
<feature type="binding site" evidence="1">
    <location>
        <position position="308"/>
    </location>
    <ligand>
        <name>UDP-alpha-D-glucose</name>
        <dbReference type="ChEBI" id="CHEBI:58885"/>
    </ligand>
</feature>
<feature type="binding site" evidence="1">
    <location>
        <position position="449"/>
    </location>
    <ligand>
        <name>UDP-alpha-D-glucose</name>
        <dbReference type="ChEBI" id="CHEBI:58885"/>
    </ligand>
</feature>
<feature type="binding site" evidence="1">
    <location>
        <position position="450"/>
    </location>
    <ligand>
        <name>Mn(2+)</name>
        <dbReference type="ChEBI" id="CHEBI:29035"/>
    </ligand>
</feature>
<feature type="binding site" evidence="1">
    <location>
        <position position="474"/>
    </location>
    <ligand>
        <name>Mn(2+)</name>
        <dbReference type="ChEBI" id="CHEBI:29035"/>
    </ligand>
</feature>
<feature type="glycosylation site" description="N-linked (GlcNAc...) asparagine" evidence="4">
    <location>
        <position position="862"/>
    </location>
</feature>
<gene>
    <name type="primary">CESA4</name>
    <name type="ordered locus">Os01g0750300</name>
    <name type="ordered locus">LOC_Os01g54620</name>
    <name type="ORF">P0046E05.4</name>
</gene>
<sequence>MMESGVPPCAACGDDAHAACRACSYALCKACLDEDAAEGRTTCARCGGEYGAPDPAHGQGAVVEEEVEESHEPAAGGVRERVTMASQLSDHQDEGVHARTMSTHARTISSVSGVGSELNDESGKPIWKNRVESWKEKKKEKKASAKKAAAKAQAPPVEEQIMDEKDLTDAYEPLSRIIPISKNKLTPYRAVIIMRLVVLGLFFHYRITNPVYSAFGLWMTSVICEIWFGFSWILDQFPKWCPINRETYVDRLIARYGDGEDSGLAPVDFFVSTVDPLKEPPLITANTVLSILAVDYPVEKISCYVSDDGSAMLTFESLAETAEFARRWVPFCKKYSIEPRAPEFYFSQKIDYLKDKIHPSFVKERRAMKRDYEEYKVRINALVAKAQKTPEEGWIMQDGTPWPGNNPRDHPGMIQVFLGETGARDFDGNELPRLVYVSREKRPGYQHHKKAGAMNALVRVSAVLTNAPYILNLDCDHYVNNSKAVREAMCFMMDPSVGRDVCYVQFPQRFDGIDRSDRYANRNVVFFDVNMKGLDGLQGPVYVGTGCCFYRQALYGYGPPSLPALPKSSVCSWCCCCCPKKKAEKSEKEMHRDSRREDLESAIFNLREIDNYDEYERSMLISQMSFEKSFGLSSVFIESTLMENGGVPESANPSTLIKEAIHVISCGYEEKTEWGKEIGWIYGSVTEDILTGFKMHCRGWRSIYCMPIRPAFKGSAPINLSDRLHQVLRWALGSVEIFLSRHCPLWYGYGGGRLKWLQRLSYINTIVYPFTSLPLIAYCCLPAICLLTGKFIIPTLSNAATIWFLGLFISIIVTSVLELRWSGIGIEDWWRNEQFWVIGGVSAHLFAVFQGILKMIAGLDTNFTVTAKATDDTEFGELYVFKWTTVLIPPTSILVLNLVGVVAGFSDALNSGYESWGPLFGKVFFAMWVIMHLYPFLKGLMGRQNRTPTIVVLWSVLLASVFSLLWVKIDPFIGSSETTTTNSCANFDC</sequence>
<comment type="function">
    <text evidence="2 6 7">Catalytic subunit of cellulose synthase terminal complexes ('rosettes'), required for beta-1,4-glucan microfibril crystallization, a major mechanism of the cell wall formation (By similarity). Involved in the secondary cell wall formation.</text>
</comment>
<comment type="catalytic activity">
    <reaction evidence="8">
        <text>[(1-&gt;4)-beta-D-glucosyl](n) + UDP-alpha-D-glucose = [(1-&gt;4)-beta-D-glucosyl](n+1) + UDP + H(+)</text>
        <dbReference type="Rhea" id="RHEA:19929"/>
        <dbReference type="Rhea" id="RHEA-COMP:10033"/>
        <dbReference type="Rhea" id="RHEA-COMP:10034"/>
        <dbReference type="ChEBI" id="CHEBI:15378"/>
        <dbReference type="ChEBI" id="CHEBI:18246"/>
        <dbReference type="ChEBI" id="CHEBI:58223"/>
        <dbReference type="ChEBI" id="CHEBI:58885"/>
        <dbReference type="EC" id="2.4.1.12"/>
    </reaction>
</comment>
<comment type="cofactor">
    <cofactor evidence="1">
        <name>Mn(2+)</name>
        <dbReference type="ChEBI" id="CHEBI:29035"/>
    </cofactor>
</comment>
<comment type="cofactor">
    <cofactor evidence="2">
        <name>Zn(2+)</name>
        <dbReference type="ChEBI" id="CHEBI:29105"/>
    </cofactor>
    <text evidence="2">Binds 2 Zn(2+) ions per subunit.</text>
</comment>
<comment type="pathway">
    <text>Glycan metabolism; plant cellulose biosynthesis.</text>
</comment>
<comment type="subcellular location">
    <subcellularLocation>
        <location evidence="8">Cell membrane</location>
        <topology evidence="8">Multi-pass membrane protein</topology>
    </subcellularLocation>
</comment>
<comment type="disruption phenotype">
    <text evidence="6 7">Plants develop a brittle culm (bc) phenotype with a reduction of up to 80 percent of cellulose content in culm.</text>
</comment>
<comment type="similarity">
    <text evidence="8">Belongs to the glycosyltransferase 2 family. Plant cellulose synthase subfamily.</text>
</comment>
<reference key="1">
    <citation type="journal article" date="2002" name="Nature">
        <title>The genome sequence and structure of rice chromosome 1.</title>
        <authorList>
            <person name="Sasaki T."/>
            <person name="Matsumoto T."/>
            <person name="Yamamoto K."/>
            <person name="Sakata K."/>
            <person name="Baba T."/>
            <person name="Katayose Y."/>
            <person name="Wu J."/>
            <person name="Niimura Y."/>
            <person name="Cheng Z."/>
            <person name="Nagamura Y."/>
            <person name="Antonio B.A."/>
            <person name="Kanamori H."/>
            <person name="Hosokawa S."/>
            <person name="Masukawa M."/>
            <person name="Arikawa K."/>
            <person name="Chiden Y."/>
            <person name="Hayashi M."/>
            <person name="Okamoto M."/>
            <person name="Ando T."/>
            <person name="Aoki H."/>
            <person name="Arita K."/>
            <person name="Hamada M."/>
            <person name="Harada C."/>
            <person name="Hijishita S."/>
            <person name="Honda M."/>
            <person name="Ichikawa Y."/>
            <person name="Idonuma A."/>
            <person name="Iijima M."/>
            <person name="Ikeda M."/>
            <person name="Ikeno M."/>
            <person name="Ito S."/>
            <person name="Ito T."/>
            <person name="Ito Y."/>
            <person name="Ito Y."/>
            <person name="Iwabuchi A."/>
            <person name="Kamiya K."/>
            <person name="Karasawa W."/>
            <person name="Katagiri S."/>
            <person name="Kikuta A."/>
            <person name="Kobayashi N."/>
            <person name="Kono I."/>
            <person name="Machita K."/>
            <person name="Maehara T."/>
            <person name="Mizuno H."/>
            <person name="Mizubayashi T."/>
            <person name="Mukai Y."/>
            <person name="Nagasaki H."/>
            <person name="Nakashima M."/>
            <person name="Nakama Y."/>
            <person name="Nakamichi Y."/>
            <person name="Nakamura M."/>
            <person name="Namiki N."/>
            <person name="Negishi M."/>
            <person name="Ohta I."/>
            <person name="Ono N."/>
            <person name="Saji S."/>
            <person name="Sakai K."/>
            <person name="Shibata M."/>
            <person name="Shimokawa T."/>
            <person name="Shomura A."/>
            <person name="Song J."/>
            <person name="Takazaki Y."/>
            <person name="Terasawa K."/>
            <person name="Tsuji K."/>
            <person name="Waki K."/>
            <person name="Yamagata H."/>
            <person name="Yamane H."/>
            <person name="Yoshiki S."/>
            <person name="Yoshihara R."/>
            <person name="Yukawa K."/>
            <person name="Zhong H."/>
            <person name="Iwama H."/>
            <person name="Endo T."/>
            <person name="Ito H."/>
            <person name="Hahn J.H."/>
            <person name="Kim H.-I."/>
            <person name="Eun M.-Y."/>
            <person name="Yano M."/>
            <person name="Jiang J."/>
            <person name="Gojobori T."/>
        </authorList>
    </citation>
    <scope>NUCLEOTIDE SEQUENCE [LARGE SCALE GENOMIC DNA]</scope>
    <source>
        <strain>cv. Nipponbare</strain>
    </source>
</reference>
<reference key="2">
    <citation type="journal article" date="2005" name="Nature">
        <title>The map-based sequence of the rice genome.</title>
        <authorList>
            <consortium name="International rice genome sequencing project (IRGSP)"/>
        </authorList>
    </citation>
    <scope>NUCLEOTIDE SEQUENCE [LARGE SCALE GENOMIC DNA]</scope>
    <source>
        <strain>cv. Nipponbare</strain>
    </source>
</reference>
<reference key="3">
    <citation type="journal article" date="2008" name="Nucleic Acids Res.">
        <title>The rice annotation project database (RAP-DB): 2008 update.</title>
        <authorList>
            <consortium name="The rice annotation project (RAP)"/>
        </authorList>
    </citation>
    <scope>GENOME REANNOTATION</scope>
    <source>
        <strain>cv. Nipponbare</strain>
    </source>
</reference>
<reference key="4">
    <citation type="journal article" date="2013" name="Rice">
        <title>Improvement of the Oryza sativa Nipponbare reference genome using next generation sequence and optical map data.</title>
        <authorList>
            <person name="Kawahara Y."/>
            <person name="de la Bastide M."/>
            <person name="Hamilton J.P."/>
            <person name="Kanamori H."/>
            <person name="McCombie W.R."/>
            <person name="Ouyang S."/>
            <person name="Schwartz D.C."/>
            <person name="Tanaka T."/>
            <person name="Wu J."/>
            <person name="Zhou S."/>
            <person name="Childs K.L."/>
            <person name="Davidson R.M."/>
            <person name="Lin H."/>
            <person name="Quesada-Ocampo L."/>
            <person name="Vaillancourt B."/>
            <person name="Sakai H."/>
            <person name="Lee S.S."/>
            <person name="Kim J."/>
            <person name="Numa H."/>
            <person name="Itoh T."/>
            <person name="Buell C.R."/>
            <person name="Matsumoto T."/>
        </authorList>
    </citation>
    <scope>GENOME REANNOTATION</scope>
    <source>
        <strain>cv. Nipponbare</strain>
    </source>
</reference>
<reference key="5">
    <citation type="journal article" date="2003" name="Science">
        <title>Collection, mapping, and annotation of over 28,000 cDNA clones from japonica rice.</title>
        <authorList>
            <consortium name="The rice full-length cDNA consortium"/>
        </authorList>
    </citation>
    <scope>NUCLEOTIDE SEQUENCE [LARGE SCALE MRNA]</scope>
    <source>
        <strain>cv. Nipponbare</strain>
    </source>
</reference>
<reference key="6">
    <citation type="journal article" date="2003" name="Plant Physiol.">
        <title>Three distinct rice cellulose synthase catalytic subunit genes required for cellulose synthesis in the secondary wall.</title>
        <authorList>
            <person name="Tanaka K."/>
            <person name="Murata K."/>
            <person name="Yamazaki M."/>
            <person name="Onosato K."/>
            <person name="Miyao A."/>
            <person name="Hirochika H."/>
        </authorList>
    </citation>
    <scope>FUNCTION</scope>
    <scope>DISRUPTION PHENOTYPE</scope>
    <scope>TISSUE SPECIFICITY</scope>
</reference>
<reference key="7">
    <citation type="journal article" date="2007" name="J. Genet. Genomics">
        <title>Fine mapping and isolation of Bc7(t), allelic to OsCesA4.</title>
        <authorList>
            <person name="Yan C."/>
            <person name="Yan S."/>
            <person name="Zeng X."/>
            <person name="Zhang Z."/>
            <person name="Gu M."/>
        </authorList>
    </citation>
    <scope>FUNCTION</scope>
    <scope>DISRUPTION PHENOTYPE</scope>
</reference>
<organism>
    <name type="scientific">Oryza sativa subsp. japonica</name>
    <name type="common">Rice</name>
    <dbReference type="NCBI Taxonomy" id="39947"/>
    <lineage>
        <taxon>Eukaryota</taxon>
        <taxon>Viridiplantae</taxon>
        <taxon>Streptophyta</taxon>
        <taxon>Embryophyta</taxon>
        <taxon>Tracheophyta</taxon>
        <taxon>Spermatophyta</taxon>
        <taxon>Magnoliopsida</taxon>
        <taxon>Liliopsida</taxon>
        <taxon>Poales</taxon>
        <taxon>Poaceae</taxon>
        <taxon>BOP clade</taxon>
        <taxon>Oryzoideae</taxon>
        <taxon>Oryzeae</taxon>
        <taxon>Oryzinae</taxon>
        <taxon>Oryza</taxon>
        <taxon>Oryza sativa</taxon>
    </lineage>
</organism>
<evidence type="ECO:0000250" key="1">
    <source>
        <dbReference type="UniProtKB" id="Q941L0"/>
    </source>
</evidence>
<evidence type="ECO:0000250" key="2">
    <source>
        <dbReference type="UniProtKB" id="Q9SWW6"/>
    </source>
</evidence>
<evidence type="ECO:0000255" key="3"/>
<evidence type="ECO:0000255" key="4">
    <source>
        <dbReference type="PROSITE-ProRule" id="PRU00498"/>
    </source>
</evidence>
<evidence type="ECO:0000256" key="5">
    <source>
        <dbReference type="SAM" id="MobiDB-lite"/>
    </source>
</evidence>
<evidence type="ECO:0000269" key="6">
    <source>
    </source>
</evidence>
<evidence type="ECO:0000269" key="7">
    <source>
    </source>
</evidence>
<evidence type="ECO:0000305" key="8"/>
<accession>Q5JN63</accession>
<accession>B7EQH8</accession>
<proteinExistence type="evidence at transcript level"/>